<feature type="signal peptide" evidence="2">
    <location>
        <begin position="1"/>
        <end position="17"/>
    </location>
</feature>
<feature type="chain" id="PRO_0000021190" description="Endothelial protein C receptor">
    <location>
        <begin position="18"/>
        <end position="241"/>
    </location>
</feature>
<feature type="topological domain" description="Extracellular" evidence="2">
    <location>
        <begin position="18"/>
        <end position="212"/>
    </location>
</feature>
<feature type="transmembrane region" description="Helical" evidence="2">
    <location>
        <begin position="213"/>
        <end position="233"/>
    </location>
</feature>
<feature type="topological domain" description="Cytoplasmic" evidence="2">
    <location>
        <begin position="234"/>
        <end position="241"/>
    </location>
</feature>
<feature type="glycosylation site" description="N-linked (GlcNAc...) asparagine" evidence="2">
    <location>
        <position position="49"/>
    </location>
</feature>
<feature type="glycosylation site" description="N-linked (GlcNAc...) asparagine" evidence="2">
    <location>
        <position position="66"/>
    </location>
</feature>
<feature type="glycosylation site" description="N-linked (GlcNAc...) asparagine" evidence="2">
    <location>
        <position position="138"/>
    </location>
</feature>
<feature type="glycosylation site" description="N-linked (GlcNAc...) asparagine" evidence="2">
    <location>
        <position position="174"/>
    </location>
</feature>
<feature type="disulfide bond" evidence="1">
    <location>
        <begin position="120"/>
        <end position="188"/>
    </location>
</feature>
<feature type="disulfide bond" evidence="1">
    <location>
        <begin position="221"/>
        <end position="234"/>
    </location>
</feature>
<proteinExistence type="evidence at transcript level"/>
<accession>Q28105</accession>
<accession>Q1LZD2</accession>
<protein>
    <recommendedName>
        <fullName>Endothelial protein C receptor</fullName>
    </recommendedName>
    <alternativeName>
        <fullName>Activated protein C receptor</fullName>
        <shortName>APC receptor</shortName>
    </alternativeName>
    <alternativeName>
        <fullName>Endothelial cell protein C receptor</fullName>
    </alternativeName>
    <cdAntigenName>CD201</cdAntigenName>
</protein>
<name>EPCR_BOVIN</name>
<dbReference type="EMBL" id="L39065">
    <property type="protein sequence ID" value="AAA87356.1"/>
    <property type="molecule type" value="mRNA"/>
</dbReference>
<dbReference type="EMBL" id="BC116074">
    <property type="protein sequence ID" value="AAI16075.1"/>
    <property type="molecule type" value="mRNA"/>
</dbReference>
<dbReference type="PIR" id="B55945">
    <property type="entry name" value="B55945"/>
</dbReference>
<dbReference type="RefSeq" id="NP_776862.1">
    <property type="nucleotide sequence ID" value="NM_174437.1"/>
</dbReference>
<dbReference type="SMR" id="Q28105"/>
<dbReference type="FunCoup" id="Q28105">
    <property type="interactions" value="223"/>
</dbReference>
<dbReference type="STRING" id="9913.ENSBTAP00000010911"/>
<dbReference type="GlyCosmos" id="Q28105">
    <property type="glycosylation" value="4 sites, No reported glycans"/>
</dbReference>
<dbReference type="GlyGen" id="Q28105">
    <property type="glycosylation" value="4 sites"/>
</dbReference>
<dbReference type="PaxDb" id="9913-ENSBTAP00000010911"/>
<dbReference type="GeneID" id="282005"/>
<dbReference type="KEGG" id="bta:282005"/>
<dbReference type="CTD" id="10544"/>
<dbReference type="VEuPathDB" id="HostDB:ENSBTAG00000008291"/>
<dbReference type="eggNOG" id="ENOG502S3SK">
    <property type="taxonomic scope" value="Eukaryota"/>
</dbReference>
<dbReference type="HOGENOM" id="CLU_1151498_0_0_1"/>
<dbReference type="InParanoid" id="Q28105"/>
<dbReference type="OMA" id="WGNASLD"/>
<dbReference type="OrthoDB" id="9441389at2759"/>
<dbReference type="TreeFam" id="TF335868"/>
<dbReference type="Reactome" id="R-BTA-140875">
    <property type="pathway name" value="Common Pathway of Fibrin Clot Formation"/>
</dbReference>
<dbReference type="Reactome" id="R-BTA-202733">
    <property type="pathway name" value="Cell surface interactions at the vascular wall"/>
</dbReference>
<dbReference type="Proteomes" id="UP000009136">
    <property type="component" value="Chromosome 13"/>
</dbReference>
<dbReference type="Bgee" id="ENSBTAG00000008291">
    <property type="expression patterns" value="Expressed in ureter and 101 other cell types or tissues"/>
</dbReference>
<dbReference type="GO" id="GO:0005615">
    <property type="term" value="C:extracellular space"/>
    <property type="evidence" value="ECO:0000318"/>
    <property type="project" value="GO_Central"/>
</dbReference>
<dbReference type="GO" id="GO:0016020">
    <property type="term" value="C:membrane"/>
    <property type="evidence" value="ECO:0007669"/>
    <property type="project" value="UniProtKB-SubCell"/>
</dbReference>
<dbReference type="GO" id="GO:0038023">
    <property type="term" value="F:signaling receptor activity"/>
    <property type="evidence" value="ECO:0007669"/>
    <property type="project" value="InterPro"/>
</dbReference>
<dbReference type="GO" id="GO:0007596">
    <property type="term" value="P:blood coagulation"/>
    <property type="evidence" value="ECO:0007669"/>
    <property type="project" value="UniProtKB-KW"/>
</dbReference>
<dbReference type="GO" id="GO:0050819">
    <property type="term" value="P:negative regulation of coagulation"/>
    <property type="evidence" value="ECO:0000318"/>
    <property type="project" value="GO_Central"/>
</dbReference>
<dbReference type="Gene3D" id="3.30.500.10">
    <property type="entry name" value="MHC class I-like antigen recognition-like"/>
    <property type="match status" value="1"/>
</dbReference>
<dbReference type="InterPro" id="IPR015669">
    <property type="entry name" value="Endothetial_C_recpt"/>
</dbReference>
<dbReference type="InterPro" id="IPR011161">
    <property type="entry name" value="MHC_I-like_Ag-recog"/>
</dbReference>
<dbReference type="InterPro" id="IPR037055">
    <property type="entry name" value="MHC_I-like_Ag-recog_sf"/>
</dbReference>
<dbReference type="InterPro" id="IPR011162">
    <property type="entry name" value="MHC_I/II-like_Ag-recog"/>
</dbReference>
<dbReference type="PANTHER" id="PTHR15349">
    <property type="entry name" value="ENDOTHELIAL PROTEIN C RECEPTOR"/>
    <property type="match status" value="1"/>
</dbReference>
<dbReference type="PANTHER" id="PTHR15349:SF0">
    <property type="entry name" value="ENDOTHELIAL PROTEIN C RECEPTOR"/>
    <property type="match status" value="1"/>
</dbReference>
<dbReference type="Pfam" id="PF16497">
    <property type="entry name" value="MHC_I_3"/>
    <property type="match status" value="1"/>
</dbReference>
<dbReference type="SUPFAM" id="SSF54452">
    <property type="entry name" value="MHC antigen-recognition domain"/>
    <property type="match status" value="1"/>
</dbReference>
<organism>
    <name type="scientific">Bos taurus</name>
    <name type="common">Bovine</name>
    <dbReference type="NCBI Taxonomy" id="9913"/>
    <lineage>
        <taxon>Eukaryota</taxon>
        <taxon>Metazoa</taxon>
        <taxon>Chordata</taxon>
        <taxon>Craniata</taxon>
        <taxon>Vertebrata</taxon>
        <taxon>Euteleostomi</taxon>
        <taxon>Mammalia</taxon>
        <taxon>Eutheria</taxon>
        <taxon>Laurasiatheria</taxon>
        <taxon>Artiodactyla</taxon>
        <taxon>Ruminantia</taxon>
        <taxon>Pecora</taxon>
        <taxon>Bovidae</taxon>
        <taxon>Bovinae</taxon>
        <taxon>Bos</taxon>
    </lineage>
</organism>
<gene>
    <name type="primary">PROCR</name>
    <name type="synonym">EPCR</name>
</gene>
<keyword id="KW-0094">Blood coagulation</keyword>
<keyword id="KW-1015">Disulfide bond</keyword>
<keyword id="KW-0325">Glycoprotein</keyword>
<keyword id="KW-0356">Hemostasis</keyword>
<keyword id="KW-0472">Membrane</keyword>
<keyword id="KW-0675">Receptor</keyword>
<keyword id="KW-1185">Reference proteome</keyword>
<keyword id="KW-0732">Signal</keyword>
<keyword id="KW-0812">Transmembrane</keyword>
<keyword id="KW-1133">Transmembrane helix</keyword>
<evidence type="ECO:0000250" key="1"/>
<evidence type="ECO:0000255" key="2"/>
<sequence>MLTTLLPLLPLLLPGWALCSQEASDGPWDLHMTQVSYFRNPSQVWHRGNATLGGVLTHVLEGPGRNVSIQQLQPLQEPDSWALTKIYLNRYLEEFVGLVQVVHQERGVTFPLIIRCFLGCELPPEGSEARVFFEVAVNGSSFVNFQPKTASWVAEPHAPSRVVTYTVDQLNKYNRTRYELREFLQDTCVQYIQKHITTNNLKGSQTGRSYTSLVLGVLVGCFIVTGVAVGIFLCTGGRRRC</sequence>
<reference key="1">
    <citation type="journal article" date="1995" name="J. Biol. Chem.">
        <title>Molecular cloning and expression of murine and bovine endothelial cell protein C/activated protein C receptor (EPCR). The structural and functional conservation in human, bovine, and murine EPCR.</title>
        <authorList>
            <person name="Fukudome K."/>
            <person name="Esmon C.T."/>
        </authorList>
    </citation>
    <scope>NUCLEOTIDE SEQUENCE [MRNA]</scope>
</reference>
<reference key="2">
    <citation type="submission" date="2006-05" db="EMBL/GenBank/DDBJ databases">
        <authorList>
            <consortium name="NIH - Mammalian Gene Collection (MGC) project"/>
        </authorList>
    </citation>
    <scope>NUCLEOTIDE SEQUENCE [LARGE SCALE MRNA]</scope>
    <source>
        <strain>Hereford</strain>
        <tissue>Ascending colon</tissue>
    </source>
</reference>
<comment type="function">
    <text>Binds activated protein C. Enhances protein C activation by the thrombin-thrombomodulin complex; plays a role in the protein C pathway controlling blood coagulation.</text>
</comment>
<comment type="subcellular location">
    <subcellularLocation>
        <location>Membrane</location>
        <topology>Single-pass type I membrane protein</topology>
    </subcellularLocation>
</comment>
<comment type="tissue specificity">
    <text>Expressed in endothelial cells.</text>
</comment>